<dbReference type="EMBL" id="CP001185">
    <property type="protein sequence ID" value="ACJ75673.1"/>
    <property type="molecule type" value="Genomic_DNA"/>
</dbReference>
<dbReference type="RefSeq" id="WP_004101463.1">
    <property type="nucleotide sequence ID" value="NC_011653.1"/>
</dbReference>
<dbReference type="SMR" id="B7IHV9"/>
<dbReference type="STRING" id="484019.THA_1228"/>
<dbReference type="KEGG" id="taf:THA_1228"/>
<dbReference type="eggNOG" id="COG0199">
    <property type="taxonomic scope" value="Bacteria"/>
</dbReference>
<dbReference type="HOGENOM" id="CLU_139869_3_0_0"/>
<dbReference type="OrthoDB" id="9810484at2"/>
<dbReference type="Proteomes" id="UP000002453">
    <property type="component" value="Chromosome"/>
</dbReference>
<dbReference type="GO" id="GO:0005737">
    <property type="term" value="C:cytoplasm"/>
    <property type="evidence" value="ECO:0007669"/>
    <property type="project" value="UniProtKB-ARBA"/>
</dbReference>
<dbReference type="GO" id="GO:0015935">
    <property type="term" value="C:small ribosomal subunit"/>
    <property type="evidence" value="ECO:0007669"/>
    <property type="project" value="TreeGrafter"/>
</dbReference>
<dbReference type="GO" id="GO:0019843">
    <property type="term" value="F:rRNA binding"/>
    <property type="evidence" value="ECO:0007669"/>
    <property type="project" value="UniProtKB-UniRule"/>
</dbReference>
<dbReference type="GO" id="GO:0003735">
    <property type="term" value="F:structural constituent of ribosome"/>
    <property type="evidence" value="ECO:0007669"/>
    <property type="project" value="InterPro"/>
</dbReference>
<dbReference type="GO" id="GO:0008270">
    <property type="term" value="F:zinc ion binding"/>
    <property type="evidence" value="ECO:0007669"/>
    <property type="project" value="UniProtKB-UniRule"/>
</dbReference>
<dbReference type="GO" id="GO:0006412">
    <property type="term" value="P:translation"/>
    <property type="evidence" value="ECO:0007669"/>
    <property type="project" value="UniProtKB-UniRule"/>
</dbReference>
<dbReference type="FunFam" id="4.10.830.10:FF:000001">
    <property type="entry name" value="30S ribosomal protein S14 type Z"/>
    <property type="match status" value="1"/>
</dbReference>
<dbReference type="Gene3D" id="4.10.830.10">
    <property type="entry name" value="30s Ribosomal Protein S14, Chain N"/>
    <property type="match status" value="1"/>
</dbReference>
<dbReference type="HAMAP" id="MF_01364_B">
    <property type="entry name" value="Ribosomal_uS14_2_B"/>
    <property type="match status" value="1"/>
</dbReference>
<dbReference type="InterPro" id="IPR001209">
    <property type="entry name" value="Ribosomal_uS14"/>
</dbReference>
<dbReference type="InterPro" id="IPR023053">
    <property type="entry name" value="Ribosomal_uS14_bact"/>
</dbReference>
<dbReference type="InterPro" id="IPR018271">
    <property type="entry name" value="Ribosomal_uS14_CS"/>
</dbReference>
<dbReference type="InterPro" id="IPR043140">
    <property type="entry name" value="Ribosomal_uS14_sf"/>
</dbReference>
<dbReference type="NCBIfam" id="NF005974">
    <property type="entry name" value="PRK08061.1"/>
    <property type="match status" value="1"/>
</dbReference>
<dbReference type="PANTHER" id="PTHR19836">
    <property type="entry name" value="30S RIBOSOMAL PROTEIN S14"/>
    <property type="match status" value="1"/>
</dbReference>
<dbReference type="PANTHER" id="PTHR19836:SF19">
    <property type="entry name" value="SMALL RIBOSOMAL SUBUNIT PROTEIN US14M"/>
    <property type="match status" value="1"/>
</dbReference>
<dbReference type="Pfam" id="PF00253">
    <property type="entry name" value="Ribosomal_S14"/>
    <property type="match status" value="1"/>
</dbReference>
<dbReference type="SUPFAM" id="SSF57716">
    <property type="entry name" value="Glucocorticoid receptor-like (DNA-binding domain)"/>
    <property type="match status" value="1"/>
</dbReference>
<dbReference type="PROSITE" id="PS00527">
    <property type="entry name" value="RIBOSOMAL_S14"/>
    <property type="match status" value="1"/>
</dbReference>
<evidence type="ECO:0000255" key="1">
    <source>
        <dbReference type="HAMAP-Rule" id="MF_01364"/>
    </source>
</evidence>
<evidence type="ECO:0000305" key="2"/>
<keyword id="KW-0479">Metal-binding</keyword>
<keyword id="KW-1185">Reference proteome</keyword>
<keyword id="KW-0687">Ribonucleoprotein</keyword>
<keyword id="KW-0689">Ribosomal protein</keyword>
<keyword id="KW-0694">RNA-binding</keyword>
<keyword id="KW-0699">rRNA-binding</keyword>
<keyword id="KW-0862">Zinc</keyword>
<name>RS14Z_THEAB</name>
<organism>
    <name type="scientific">Thermosipho africanus (strain TCF52B)</name>
    <dbReference type="NCBI Taxonomy" id="484019"/>
    <lineage>
        <taxon>Bacteria</taxon>
        <taxon>Thermotogati</taxon>
        <taxon>Thermotogota</taxon>
        <taxon>Thermotogae</taxon>
        <taxon>Thermotogales</taxon>
        <taxon>Fervidobacteriaceae</taxon>
        <taxon>Thermosipho</taxon>
    </lineage>
</organism>
<gene>
    <name evidence="1" type="primary">rpsZ</name>
    <name evidence="1" type="synonym">rpsN</name>
    <name type="ordered locus">THA_1228</name>
</gene>
<accession>B7IHV9</accession>
<reference key="1">
    <citation type="journal article" date="2009" name="J. Bacteriol.">
        <title>The genome of Thermosipho africanus TCF52B: lateral genetic connections to the Firmicutes and Archaea.</title>
        <authorList>
            <person name="Nesboe C.L."/>
            <person name="Bapteste E."/>
            <person name="Curtis B."/>
            <person name="Dahle H."/>
            <person name="Lopez P."/>
            <person name="Macleod D."/>
            <person name="Dlutek M."/>
            <person name="Bowman S."/>
            <person name="Zhaxybayeva O."/>
            <person name="Birkeland N.-K."/>
            <person name="Doolittle W.F."/>
        </authorList>
    </citation>
    <scope>NUCLEOTIDE SEQUENCE [LARGE SCALE GENOMIC DNA]</scope>
    <source>
        <strain>TCF52B</strain>
    </source>
</reference>
<protein>
    <recommendedName>
        <fullName evidence="1">Small ribosomal subunit protein uS14</fullName>
    </recommendedName>
    <alternativeName>
        <fullName evidence="2">30S ribosomal protein S14 type Z</fullName>
    </alternativeName>
</protein>
<proteinExistence type="inferred from homology"/>
<comment type="function">
    <text evidence="1">Binds 16S rRNA, required for the assembly of 30S particles and may also be responsible for determining the conformation of the 16S rRNA at the A site.</text>
</comment>
<comment type="cofactor">
    <cofactor evidence="1">
        <name>Zn(2+)</name>
        <dbReference type="ChEBI" id="CHEBI:29105"/>
    </cofactor>
    <text evidence="1">Binds 1 zinc ion per subunit.</text>
</comment>
<comment type="subunit">
    <text evidence="1">Part of the 30S ribosomal subunit. Contacts proteins S3 and S10.</text>
</comment>
<comment type="similarity">
    <text evidence="1">Belongs to the universal ribosomal protein uS14 family. Zinc-binding uS14 subfamily.</text>
</comment>
<feature type="chain" id="PRO_1000143922" description="Small ribosomal subunit protein uS14">
    <location>
        <begin position="1"/>
        <end position="61"/>
    </location>
</feature>
<feature type="binding site" evidence="1">
    <location>
        <position position="24"/>
    </location>
    <ligand>
        <name>Zn(2+)</name>
        <dbReference type="ChEBI" id="CHEBI:29105"/>
    </ligand>
</feature>
<feature type="binding site" evidence="1">
    <location>
        <position position="27"/>
    </location>
    <ligand>
        <name>Zn(2+)</name>
        <dbReference type="ChEBI" id="CHEBI:29105"/>
    </ligand>
</feature>
<feature type="binding site" evidence="1">
    <location>
        <position position="40"/>
    </location>
    <ligand>
        <name>Zn(2+)</name>
        <dbReference type="ChEBI" id="CHEBI:29105"/>
    </ligand>
</feature>
<feature type="binding site" evidence="1">
    <location>
        <position position="43"/>
    </location>
    <ligand>
        <name>Zn(2+)</name>
        <dbReference type="ChEBI" id="CHEBI:29105"/>
    </ligand>
</feature>
<sequence>MARKGLVERWKKPKKFKTREYTRCKICGRAHSVYREFGICRVCFRKMANEGKLPGVRKATW</sequence>